<protein>
    <recommendedName>
        <fullName evidence="1">Co-chaperonin GroES</fullName>
    </recommendedName>
    <alternativeName>
        <fullName evidence="1">10 kDa chaperonin</fullName>
    </alternativeName>
    <alternativeName>
        <fullName evidence="1">Chaperonin-10</fullName>
        <shortName evidence="1">Cpn10</shortName>
    </alternativeName>
</protein>
<dbReference type="EMBL" id="Z68137">
    <property type="protein sequence ID" value="CAA92241.1"/>
    <property type="molecule type" value="Genomic_DNA"/>
</dbReference>
<dbReference type="EMBL" id="CP000568">
    <property type="protein sequence ID" value="ABN54089.1"/>
    <property type="molecule type" value="Genomic_DNA"/>
</dbReference>
<dbReference type="PIR" id="S68248">
    <property type="entry name" value="S68248"/>
</dbReference>
<dbReference type="RefSeq" id="WP_003514587.1">
    <property type="nucleotide sequence ID" value="NC_009012.1"/>
</dbReference>
<dbReference type="SMR" id="P48223"/>
<dbReference type="STRING" id="203119.Cthe_2891"/>
<dbReference type="GeneID" id="35805187"/>
<dbReference type="KEGG" id="cth:Cthe_2891"/>
<dbReference type="eggNOG" id="COG0234">
    <property type="taxonomic scope" value="Bacteria"/>
</dbReference>
<dbReference type="HOGENOM" id="CLU_132825_2_0_9"/>
<dbReference type="OrthoDB" id="9806791at2"/>
<dbReference type="Proteomes" id="UP000002145">
    <property type="component" value="Chromosome"/>
</dbReference>
<dbReference type="GO" id="GO:0005737">
    <property type="term" value="C:cytoplasm"/>
    <property type="evidence" value="ECO:0007669"/>
    <property type="project" value="UniProtKB-SubCell"/>
</dbReference>
<dbReference type="GO" id="GO:0005524">
    <property type="term" value="F:ATP binding"/>
    <property type="evidence" value="ECO:0007669"/>
    <property type="project" value="InterPro"/>
</dbReference>
<dbReference type="GO" id="GO:0046872">
    <property type="term" value="F:metal ion binding"/>
    <property type="evidence" value="ECO:0007669"/>
    <property type="project" value="TreeGrafter"/>
</dbReference>
<dbReference type="GO" id="GO:0044183">
    <property type="term" value="F:protein folding chaperone"/>
    <property type="evidence" value="ECO:0007669"/>
    <property type="project" value="InterPro"/>
</dbReference>
<dbReference type="GO" id="GO:0051087">
    <property type="term" value="F:protein-folding chaperone binding"/>
    <property type="evidence" value="ECO:0007669"/>
    <property type="project" value="TreeGrafter"/>
</dbReference>
<dbReference type="GO" id="GO:0051082">
    <property type="term" value="F:unfolded protein binding"/>
    <property type="evidence" value="ECO:0007669"/>
    <property type="project" value="TreeGrafter"/>
</dbReference>
<dbReference type="GO" id="GO:0051085">
    <property type="term" value="P:chaperone cofactor-dependent protein refolding"/>
    <property type="evidence" value="ECO:0007669"/>
    <property type="project" value="TreeGrafter"/>
</dbReference>
<dbReference type="CDD" id="cd00320">
    <property type="entry name" value="cpn10"/>
    <property type="match status" value="1"/>
</dbReference>
<dbReference type="FunFam" id="2.30.33.40:FF:000001">
    <property type="entry name" value="10 kDa chaperonin"/>
    <property type="match status" value="1"/>
</dbReference>
<dbReference type="Gene3D" id="2.30.33.40">
    <property type="entry name" value="GroES chaperonin"/>
    <property type="match status" value="1"/>
</dbReference>
<dbReference type="HAMAP" id="MF_00580">
    <property type="entry name" value="CH10"/>
    <property type="match status" value="1"/>
</dbReference>
<dbReference type="InterPro" id="IPR020818">
    <property type="entry name" value="Chaperonin_GroES"/>
</dbReference>
<dbReference type="InterPro" id="IPR037124">
    <property type="entry name" value="Chaperonin_GroES_sf"/>
</dbReference>
<dbReference type="InterPro" id="IPR018369">
    <property type="entry name" value="Chaprnonin_Cpn10_CS"/>
</dbReference>
<dbReference type="InterPro" id="IPR011032">
    <property type="entry name" value="GroES-like_sf"/>
</dbReference>
<dbReference type="NCBIfam" id="NF001531">
    <property type="entry name" value="PRK00364.2-2"/>
    <property type="match status" value="1"/>
</dbReference>
<dbReference type="NCBIfam" id="NF001533">
    <property type="entry name" value="PRK00364.2-4"/>
    <property type="match status" value="1"/>
</dbReference>
<dbReference type="NCBIfam" id="NF001534">
    <property type="entry name" value="PRK00364.2-5"/>
    <property type="match status" value="1"/>
</dbReference>
<dbReference type="PANTHER" id="PTHR10772">
    <property type="entry name" value="10 KDA HEAT SHOCK PROTEIN"/>
    <property type="match status" value="1"/>
</dbReference>
<dbReference type="PANTHER" id="PTHR10772:SF58">
    <property type="entry name" value="CO-CHAPERONIN GROES"/>
    <property type="match status" value="1"/>
</dbReference>
<dbReference type="Pfam" id="PF00166">
    <property type="entry name" value="Cpn10"/>
    <property type="match status" value="1"/>
</dbReference>
<dbReference type="PRINTS" id="PR00297">
    <property type="entry name" value="CHAPERONIN10"/>
</dbReference>
<dbReference type="SMART" id="SM00883">
    <property type="entry name" value="Cpn10"/>
    <property type="match status" value="1"/>
</dbReference>
<dbReference type="SUPFAM" id="SSF50129">
    <property type="entry name" value="GroES-like"/>
    <property type="match status" value="1"/>
</dbReference>
<dbReference type="PROSITE" id="PS00681">
    <property type="entry name" value="CHAPERONINS_CPN10"/>
    <property type="match status" value="1"/>
</dbReference>
<keyword id="KW-0143">Chaperone</keyword>
<keyword id="KW-0963">Cytoplasm</keyword>
<keyword id="KW-0903">Direct protein sequencing</keyword>
<keyword id="KW-1185">Reference proteome</keyword>
<evidence type="ECO:0000255" key="1">
    <source>
        <dbReference type="HAMAP-Rule" id="MF_00580"/>
    </source>
</evidence>
<evidence type="ECO:0000305" key="2"/>
<feature type="chain" id="PRO_0000174739" description="Co-chaperonin GroES">
    <location>
        <begin position="1"/>
        <end position="94"/>
    </location>
</feature>
<feature type="sequence conflict" description="In Ref. 3; AA sequence." evidence="2" ref="3">
    <original>K</original>
    <variation>I</variation>
    <location>
        <position position="13"/>
    </location>
</feature>
<comment type="function">
    <text evidence="1">Together with the chaperonin GroEL, plays an essential role in assisting protein folding. The GroEL-GroES system forms a nano-cage that allows encapsulation of the non-native substrate proteins and provides a physical environment optimized to promote and accelerate protein folding. GroES binds to the apical surface of the GroEL ring, thereby capping the opening of the GroEL channel.</text>
</comment>
<comment type="subunit">
    <text evidence="1">Heptamer of 7 subunits arranged in a ring. Interacts with the chaperonin GroEL.</text>
</comment>
<comment type="subcellular location">
    <subcellularLocation>
        <location evidence="1">Cytoplasm</location>
    </subcellularLocation>
</comment>
<comment type="similarity">
    <text evidence="1 2">Belongs to the GroES chaperonin family.</text>
</comment>
<sequence length="94" mass="10156">MNIRPLGDRVVVKMVETEETTKSGIVLPGSAKEKPQVAEVVAVGPGTVVDGKEVKMEVKVGDKVIISKYAGTEVKFDGQEYTILRQNDILAVVE</sequence>
<reference key="1">
    <citation type="journal article" date="1997" name="Gene">
        <title>Sequence and transcriptional analysis of groES and groEL genes from the thermophilic bacterium Clostridium thermocellum.</title>
        <authorList>
            <person name="Ciruela A."/>
            <person name="Cross S."/>
            <person name="Freedman R.B."/>
            <person name="Hazlewood G.P."/>
        </authorList>
    </citation>
    <scope>NUCLEOTIDE SEQUENCE [GENOMIC DNA]</scope>
</reference>
<reference key="2">
    <citation type="submission" date="2007-02" db="EMBL/GenBank/DDBJ databases">
        <title>Complete sequence of Clostridium thermocellum ATCC 27405.</title>
        <authorList>
            <consortium name="US DOE Joint Genome Institute"/>
            <person name="Copeland A."/>
            <person name="Lucas S."/>
            <person name="Lapidus A."/>
            <person name="Barry K."/>
            <person name="Detter J.C."/>
            <person name="Glavina del Rio T."/>
            <person name="Hammon N."/>
            <person name="Israni S."/>
            <person name="Dalin E."/>
            <person name="Tice H."/>
            <person name="Pitluck S."/>
            <person name="Chertkov O."/>
            <person name="Brettin T."/>
            <person name="Bruce D."/>
            <person name="Han C."/>
            <person name="Tapia R."/>
            <person name="Gilna P."/>
            <person name="Schmutz J."/>
            <person name="Larimer F."/>
            <person name="Land M."/>
            <person name="Hauser L."/>
            <person name="Kyrpides N."/>
            <person name="Mikhailova N."/>
            <person name="Wu J.H.D."/>
            <person name="Newcomb M."/>
            <person name="Richardson P."/>
        </authorList>
    </citation>
    <scope>NUCLEOTIDE SEQUENCE [LARGE SCALE GENOMIC DNA]</scope>
    <source>
        <strain>ATCC 27405 / DSM 1237 / JCM 9322 / NBRC 103400 / NCIMB 10682 / NRRL B-4536 / VPI 7372</strain>
    </source>
</reference>
<reference key="3">
    <citation type="journal article" date="1996" name="Biochem. J.">
        <title>Thermostable chaperonin from Clostridium thermocellum.</title>
        <authorList>
            <person name="Cross S.J."/>
            <person name="Ciruela A."/>
            <person name="Poomputsa K."/>
            <person name="Romaniec M.P.M."/>
            <person name="Freedman R.B."/>
        </authorList>
    </citation>
    <scope>PROTEIN SEQUENCE OF 1-20</scope>
</reference>
<proteinExistence type="evidence at protein level"/>
<name>CH10_ACET2</name>
<gene>
    <name evidence="1" type="primary">groES</name>
    <name evidence="1" type="synonym">groS</name>
    <name type="ordered locus">Cthe_2891</name>
</gene>
<accession>P48223</accession>
<accession>A3DJG0</accession>
<organism>
    <name type="scientific">Acetivibrio thermocellus (strain ATCC 27405 / DSM 1237 / JCM 9322 / NBRC 103400 / NCIMB 10682 / NRRL B-4536 / VPI 7372)</name>
    <name type="common">Clostridium thermocellum</name>
    <dbReference type="NCBI Taxonomy" id="203119"/>
    <lineage>
        <taxon>Bacteria</taxon>
        <taxon>Bacillati</taxon>
        <taxon>Bacillota</taxon>
        <taxon>Clostridia</taxon>
        <taxon>Eubacteriales</taxon>
        <taxon>Oscillospiraceae</taxon>
        <taxon>Acetivibrio</taxon>
    </lineage>
</organism>